<accession>Q70LD6</accession>
<reference key="1">
    <citation type="journal article" date="2003" name="Virology">
        <title>AFV1, a novel virus infecting hyperthermophilic archaea of the genus acidianus.</title>
        <authorList>
            <person name="Bettstetter M."/>
            <person name="Peng X."/>
            <person name="Garrett R.A."/>
            <person name="Prangishvili D."/>
        </authorList>
    </citation>
    <scope>NUCLEOTIDE SEQUENCE [GENOMIC DNA]</scope>
</reference>
<organism>
    <name type="scientific">Acidianus filamentous virus 1 (isolate United States/Yellowstone)</name>
    <name type="common">AFV-1</name>
    <dbReference type="NCBI Taxonomy" id="654909"/>
    <lineage>
        <taxon>Viruses</taxon>
        <taxon>Adnaviria</taxon>
        <taxon>Zilligvirae</taxon>
        <taxon>Taleaviricota</taxon>
        <taxon>Tokiviricetes</taxon>
        <taxon>Ligamenvirales</taxon>
        <taxon>Ungulaviridae</taxon>
        <taxon>Captovirus</taxon>
        <taxon>Acidianus filamentous virus 1</taxon>
    </lineage>
</organism>
<dbReference type="EMBL" id="AJ567472">
    <property type="protein sequence ID" value="CAD98944.1"/>
    <property type="molecule type" value="Genomic_DNA"/>
</dbReference>
<dbReference type="RefSeq" id="YP_003740.1">
    <property type="nucleotide sequence ID" value="NC_005830.1"/>
</dbReference>
<dbReference type="KEGG" id="vg:2769174"/>
<dbReference type="Proteomes" id="UP000000514">
    <property type="component" value="Genome"/>
</dbReference>
<dbReference type="InterPro" id="IPR014061">
    <property type="entry name" value="BrxL-like"/>
</dbReference>
<dbReference type="Pfam" id="PF13337">
    <property type="entry name" value="BrxL_ATPase"/>
    <property type="match status" value="1"/>
</dbReference>
<gene>
    <name type="ORF">ORF426</name>
</gene>
<feature type="chain" id="PRO_0000384571" description="Uncharacterized protein ORF426">
    <location>
        <begin position="1"/>
        <end position="426"/>
    </location>
</feature>
<protein>
    <recommendedName>
        <fullName>Uncharacterized protein ORF426</fullName>
    </recommendedName>
</protein>
<organismHost>
    <name type="scientific">Acidianus hospitalis</name>
    <dbReference type="NCBI Taxonomy" id="563177"/>
</organismHost>
<organismHost>
    <name type="scientific">Acidianus infernus</name>
    <dbReference type="NCBI Taxonomy" id="12915"/>
</organismHost>
<name>Y426_AFV1Y</name>
<proteinExistence type="predicted"/>
<sequence length="426" mass="48923">MTFVEDFLSSYTFSYNPRNLETLLLGLGIKDTEGAKRAIRLGSDPKYFQVYMMYNDKAKLITRIMQFNADKYGMKLTFQNGLSVKLSPKVLAESVDDFFDMLDQWFIVSVEKDEIGVLVKSVKPVKPKTDVDIDEDFLKKVEAEVPLYIFLIASFGYKIPDKTTYNVYRDYILGRFIHLFRPSSNIPLHIAELSNRGTGKTTTFLIMRDFLGYYYTTEPPTLPFLVYDSKTKQQGIVATKNGIIFDEVQDWSGDRVKAILSVLDTGMENCTWNRSVSGSSETINRCIPIVFLGNENYISIDFYQAPSNLQQYIAEKSSMLEEVLLNKYPDIFPTKAFLDRFARIAVGNNFPSFTETITGKVLFPTILRKLIRELQKRIDRESPLNNDYEGRTRRRVEDVGQVLKGLGVDLDKPELVYAWTRFVGVQ</sequence>
<keyword id="KW-1185">Reference proteome</keyword>